<sequence>MGRELQKKKNRSGNAKIKLKPKSKRVNPLGNAIIAANWRQEETLTQNYRRLGLTSRLNTVTGGIEKKKAGPESKTSTANKLAISNTIPKSLAPTEARVERDPETGKIIRVIHDEKKTNPLNDPLDSEAEDGEGEGFEGFGDEEGSASKNEIVKMLEEQASRAGEKRERQQSEREKEWIERLVKRWGENYGAMVRDRRLNPMQQTESDIKRRVQKWKDAGGSVTTEA</sequence>
<evidence type="ECO:0000250" key="1"/>
<evidence type="ECO:0000256" key="2">
    <source>
        <dbReference type="SAM" id="MobiDB-lite"/>
    </source>
</evidence>
<evidence type="ECO:0000305" key="3"/>
<accession>A7E664</accession>
<protein>
    <recommendedName>
        <fullName>Nucleolar protein 16</fullName>
    </recommendedName>
</protein>
<name>NOP16_SCLS1</name>
<proteinExistence type="inferred from homology"/>
<comment type="function">
    <text evidence="1">Involved in the biogenesis of the 60S ribosomal subunit.</text>
</comment>
<comment type="subunit">
    <text evidence="1">Component of the pre-66S ribosomal particle.</text>
</comment>
<comment type="subcellular location">
    <subcellularLocation>
        <location evidence="1">Nucleus</location>
        <location evidence="1">Nucleolus</location>
    </subcellularLocation>
</comment>
<comment type="similarity">
    <text evidence="3">Belongs to the NOP16 family.</text>
</comment>
<feature type="chain" id="PRO_0000320386" description="Nucleolar protein 16">
    <location>
        <begin position="1"/>
        <end position="226"/>
    </location>
</feature>
<feature type="region of interest" description="Disordered" evidence="2">
    <location>
        <begin position="1"/>
        <end position="23"/>
    </location>
</feature>
<feature type="region of interest" description="Disordered" evidence="2">
    <location>
        <begin position="62"/>
        <end position="177"/>
    </location>
</feature>
<feature type="region of interest" description="Disordered" evidence="2">
    <location>
        <begin position="196"/>
        <end position="226"/>
    </location>
</feature>
<feature type="compositionally biased region" description="Basic residues" evidence="2">
    <location>
        <begin position="8"/>
        <end position="23"/>
    </location>
</feature>
<feature type="compositionally biased region" description="Polar residues" evidence="2">
    <location>
        <begin position="73"/>
        <end position="88"/>
    </location>
</feature>
<feature type="compositionally biased region" description="Basic and acidic residues" evidence="2">
    <location>
        <begin position="96"/>
        <end position="117"/>
    </location>
</feature>
<feature type="compositionally biased region" description="Acidic residues" evidence="2">
    <location>
        <begin position="124"/>
        <end position="144"/>
    </location>
</feature>
<feature type="compositionally biased region" description="Basic and acidic residues" evidence="2">
    <location>
        <begin position="150"/>
        <end position="177"/>
    </location>
</feature>
<feature type="compositionally biased region" description="Basic and acidic residues" evidence="2">
    <location>
        <begin position="206"/>
        <end position="217"/>
    </location>
</feature>
<keyword id="KW-0539">Nucleus</keyword>
<keyword id="KW-1185">Reference proteome</keyword>
<keyword id="KW-0687">Ribonucleoprotein</keyword>
<keyword id="KW-0690">Ribosome biogenesis</keyword>
<keyword id="KW-0698">rRNA processing</keyword>
<gene>
    <name type="primary">nop16</name>
    <name type="ORF">SS1G_00789</name>
</gene>
<organism>
    <name type="scientific">Sclerotinia sclerotiorum (strain ATCC 18683 / 1980 / Ss-1)</name>
    <name type="common">White mold</name>
    <name type="synonym">Whetzelinia sclerotiorum</name>
    <dbReference type="NCBI Taxonomy" id="665079"/>
    <lineage>
        <taxon>Eukaryota</taxon>
        <taxon>Fungi</taxon>
        <taxon>Dikarya</taxon>
        <taxon>Ascomycota</taxon>
        <taxon>Pezizomycotina</taxon>
        <taxon>Leotiomycetes</taxon>
        <taxon>Helotiales</taxon>
        <taxon>Sclerotiniaceae</taxon>
        <taxon>Sclerotinia</taxon>
    </lineage>
</organism>
<dbReference type="EMBL" id="CH476621">
    <property type="protein sequence ID" value="EDN91386.1"/>
    <property type="molecule type" value="Genomic_DNA"/>
</dbReference>
<dbReference type="RefSeq" id="XP_001598700.1">
    <property type="nucleotide sequence ID" value="XM_001598650.1"/>
</dbReference>
<dbReference type="SMR" id="A7E664"/>
<dbReference type="FunCoup" id="A7E664">
    <property type="interactions" value="238"/>
</dbReference>
<dbReference type="STRING" id="665079.A7E664"/>
<dbReference type="EnsemblFungi" id="EDN91386">
    <property type="protein sequence ID" value="EDN91386"/>
    <property type="gene ID" value="SS1G_00789"/>
</dbReference>
<dbReference type="GeneID" id="5494335"/>
<dbReference type="KEGG" id="ssl:SS1G_00789"/>
<dbReference type="VEuPathDB" id="FungiDB:sscle_03g024390"/>
<dbReference type="eggNOG" id="KOG4771">
    <property type="taxonomic scope" value="Eukaryota"/>
</dbReference>
<dbReference type="HOGENOM" id="CLU_078857_0_0_1"/>
<dbReference type="InParanoid" id="A7E664"/>
<dbReference type="OMA" id="MQQTEAD"/>
<dbReference type="OrthoDB" id="285729at2759"/>
<dbReference type="Proteomes" id="UP000001312">
    <property type="component" value="Unassembled WGS sequence"/>
</dbReference>
<dbReference type="GO" id="GO:0005730">
    <property type="term" value="C:nucleolus"/>
    <property type="evidence" value="ECO:0000318"/>
    <property type="project" value="GO_Central"/>
</dbReference>
<dbReference type="GO" id="GO:0030687">
    <property type="term" value="C:preribosome, large subunit precursor"/>
    <property type="evidence" value="ECO:0007669"/>
    <property type="project" value="EnsemblFungi"/>
</dbReference>
<dbReference type="GO" id="GO:0042273">
    <property type="term" value="P:ribosomal large subunit biogenesis"/>
    <property type="evidence" value="ECO:0000318"/>
    <property type="project" value="GO_Central"/>
</dbReference>
<dbReference type="GO" id="GO:0006364">
    <property type="term" value="P:rRNA processing"/>
    <property type="evidence" value="ECO:0007669"/>
    <property type="project" value="UniProtKB-KW"/>
</dbReference>
<dbReference type="InterPro" id="IPR019002">
    <property type="entry name" value="Ribosome_biogenesis_Nop16"/>
</dbReference>
<dbReference type="PANTHER" id="PTHR13243">
    <property type="entry name" value="HSPC111 PROTEIN-RELATED"/>
    <property type="match status" value="1"/>
</dbReference>
<dbReference type="PANTHER" id="PTHR13243:SF1">
    <property type="entry name" value="NUCLEOLAR PROTEIN 16"/>
    <property type="match status" value="1"/>
</dbReference>
<dbReference type="Pfam" id="PF09420">
    <property type="entry name" value="Nop16"/>
    <property type="match status" value="1"/>
</dbReference>
<reference key="1">
    <citation type="journal article" date="2011" name="PLoS Genet.">
        <title>Genomic analysis of the necrotrophic fungal pathogens Sclerotinia sclerotiorum and Botrytis cinerea.</title>
        <authorList>
            <person name="Amselem J."/>
            <person name="Cuomo C.A."/>
            <person name="van Kan J.A.L."/>
            <person name="Viaud M."/>
            <person name="Benito E.P."/>
            <person name="Couloux A."/>
            <person name="Coutinho P.M."/>
            <person name="de Vries R.P."/>
            <person name="Dyer P.S."/>
            <person name="Fillinger S."/>
            <person name="Fournier E."/>
            <person name="Gout L."/>
            <person name="Hahn M."/>
            <person name="Kohn L."/>
            <person name="Lapalu N."/>
            <person name="Plummer K.M."/>
            <person name="Pradier J.-M."/>
            <person name="Quevillon E."/>
            <person name="Sharon A."/>
            <person name="Simon A."/>
            <person name="ten Have A."/>
            <person name="Tudzynski B."/>
            <person name="Tudzynski P."/>
            <person name="Wincker P."/>
            <person name="Andrew M."/>
            <person name="Anthouard V."/>
            <person name="Beever R.E."/>
            <person name="Beffa R."/>
            <person name="Benoit I."/>
            <person name="Bouzid O."/>
            <person name="Brault B."/>
            <person name="Chen Z."/>
            <person name="Choquer M."/>
            <person name="Collemare J."/>
            <person name="Cotton P."/>
            <person name="Danchin E.G."/>
            <person name="Da Silva C."/>
            <person name="Gautier A."/>
            <person name="Giraud C."/>
            <person name="Giraud T."/>
            <person name="Gonzalez C."/>
            <person name="Grossetete S."/>
            <person name="Gueldener U."/>
            <person name="Henrissat B."/>
            <person name="Howlett B.J."/>
            <person name="Kodira C."/>
            <person name="Kretschmer M."/>
            <person name="Lappartient A."/>
            <person name="Leroch M."/>
            <person name="Levis C."/>
            <person name="Mauceli E."/>
            <person name="Neuveglise C."/>
            <person name="Oeser B."/>
            <person name="Pearson M."/>
            <person name="Poulain J."/>
            <person name="Poussereau N."/>
            <person name="Quesneville H."/>
            <person name="Rascle C."/>
            <person name="Schumacher J."/>
            <person name="Segurens B."/>
            <person name="Sexton A."/>
            <person name="Silva E."/>
            <person name="Sirven C."/>
            <person name="Soanes D.M."/>
            <person name="Talbot N.J."/>
            <person name="Templeton M."/>
            <person name="Yandava C."/>
            <person name="Yarden O."/>
            <person name="Zeng Q."/>
            <person name="Rollins J.A."/>
            <person name="Lebrun M.-H."/>
            <person name="Dickman M."/>
        </authorList>
    </citation>
    <scope>NUCLEOTIDE SEQUENCE [LARGE SCALE GENOMIC DNA]</scope>
    <source>
        <strain>ATCC 18683 / 1980 / Ss-1</strain>
    </source>
</reference>